<accession>O34546</accession>
<accession>Q795Q6</accession>
<gene>
    <name type="primary">yttB</name>
    <name type="ordered locus">BSU30350</name>
</gene>
<comment type="subcellular location">
    <subcellularLocation>
        <location evidence="2">Cell membrane</location>
        <topology evidence="2">Multi-pass membrane protein</topology>
    </subcellularLocation>
</comment>
<comment type="similarity">
    <text evidence="2">Belongs to the major facilitator superfamily.</text>
</comment>
<organism>
    <name type="scientific">Bacillus subtilis (strain 168)</name>
    <dbReference type="NCBI Taxonomy" id="224308"/>
    <lineage>
        <taxon>Bacteria</taxon>
        <taxon>Bacillati</taxon>
        <taxon>Bacillota</taxon>
        <taxon>Bacilli</taxon>
        <taxon>Bacillales</taxon>
        <taxon>Bacillaceae</taxon>
        <taxon>Bacillus</taxon>
    </lineage>
</organism>
<protein>
    <recommendedName>
        <fullName>Uncharacterized MFS-type transporter YttB</fullName>
    </recommendedName>
</protein>
<evidence type="ECO:0000255" key="1"/>
<evidence type="ECO:0000305" key="2"/>
<dbReference type="EMBL" id="AF008220">
    <property type="protein sequence ID" value="AAC00257.1"/>
    <property type="molecule type" value="Genomic_DNA"/>
</dbReference>
<dbReference type="EMBL" id="AL009126">
    <property type="protein sequence ID" value="CAB15013.1"/>
    <property type="molecule type" value="Genomic_DNA"/>
</dbReference>
<dbReference type="PIR" id="F70001">
    <property type="entry name" value="F70001"/>
</dbReference>
<dbReference type="RefSeq" id="NP_390913.1">
    <property type="nucleotide sequence ID" value="NC_000964.3"/>
</dbReference>
<dbReference type="RefSeq" id="WP_004398741.1">
    <property type="nucleotide sequence ID" value="NZ_OZ025638.1"/>
</dbReference>
<dbReference type="SMR" id="O34546"/>
<dbReference type="FunCoup" id="O34546">
    <property type="interactions" value="154"/>
</dbReference>
<dbReference type="STRING" id="224308.BSU30350"/>
<dbReference type="TCDB" id="2.A.1.2.69">
    <property type="family name" value="the major facilitator superfamily (mfs)"/>
</dbReference>
<dbReference type="PaxDb" id="224308-BSU30350"/>
<dbReference type="EnsemblBacteria" id="CAB15013">
    <property type="protein sequence ID" value="CAB15013"/>
    <property type="gene ID" value="BSU_30350"/>
</dbReference>
<dbReference type="GeneID" id="936526"/>
<dbReference type="KEGG" id="bsu:BSU30350"/>
<dbReference type="PATRIC" id="fig|224308.179.peg.3292"/>
<dbReference type="eggNOG" id="COG2814">
    <property type="taxonomic scope" value="Bacteria"/>
</dbReference>
<dbReference type="InParanoid" id="O34546"/>
<dbReference type="OrthoDB" id="3268460at2"/>
<dbReference type="PhylomeDB" id="O34546"/>
<dbReference type="BioCyc" id="BSUB:BSU30350-MONOMER"/>
<dbReference type="Proteomes" id="UP000001570">
    <property type="component" value="Chromosome"/>
</dbReference>
<dbReference type="GO" id="GO:0005886">
    <property type="term" value="C:plasma membrane"/>
    <property type="evidence" value="ECO:0000318"/>
    <property type="project" value="GO_Central"/>
</dbReference>
<dbReference type="GO" id="GO:0022857">
    <property type="term" value="F:transmembrane transporter activity"/>
    <property type="evidence" value="ECO:0007669"/>
    <property type="project" value="InterPro"/>
</dbReference>
<dbReference type="CDD" id="cd17329">
    <property type="entry name" value="MFS_MdtH_MDR_like"/>
    <property type="match status" value="1"/>
</dbReference>
<dbReference type="Gene3D" id="1.20.1250.20">
    <property type="entry name" value="MFS general substrate transporter like domains"/>
    <property type="match status" value="2"/>
</dbReference>
<dbReference type="InterPro" id="IPR011701">
    <property type="entry name" value="MFS"/>
</dbReference>
<dbReference type="InterPro" id="IPR020846">
    <property type="entry name" value="MFS_dom"/>
</dbReference>
<dbReference type="InterPro" id="IPR036259">
    <property type="entry name" value="MFS_trans_sf"/>
</dbReference>
<dbReference type="InterPro" id="IPR050171">
    <property type="entry name" value="MFS_Transporters"/>
</dbReference>
<dbReference type="PANTHER" id="PTHR23517:SF10">
    <property type="entry name" value="MAJOR FACILITATOR SUPERFAMILY (MFS) PROFILE DOMAIN-CONTAINING PROTEIN"/>
    <property type="match status" value="1"/>
</dbReference>
<dbReference type="PANTHER" id="PTHR23517">
    <property type="entry name" value="RESISTANCE PROTEIN MDTM, PUTATIVE-RELATED-RELATED"/>
    <property type="match status" value="1"/>
</dbReference>
<dbReference type="Pfam" id="PF07690">
    <property type="entry name" value="MFS_1"/>
    <property type="match status" value="1"/>
</dbReference>
<dbReference type="SUPFAM" id="SSF103473">
    <property type="entry name" value="MFS general substrate transporter"/>
    <property type="match status" value="1"/>
</dbReference>
<dbReference type="PROSITE" id="PS50850">
    <property type="entry name" value="MFS"/>
    <property type="match status" value="1"/>
</dbReference>
<name>YTTB_BACSU</name>
<feature type="chain" id="PRO_0000351509" description="Uncharacterized MFS-type transporter YttB">
    <location>
        <begin position="1"/>
        <end position="397"/>
    </location>
</feature>
<feature type="transmembrane region" description="Helical" evidence="1">
    <location>
        <begin position="5"/>
        <end position="25"/>
    </location>
</feature>
<feature type="transmembrane region" description="Helical" evidence="1">
    <location>
        <begin position="43"/>
        <end position="63"/>
    </location>
</feature>
<feature type="transmembrane region" description="Helical" evidence="1">
    <location>
        <begin position="69"/>
        <end position="89"/>
    </location>
</feature>
<feature type="transmembrane region" description="Helical" evidence="1">
    <location>
        <begin position="92"/>
        <end position="112"/>
    </location>
</feature>
<feature type="transmembrane region" description="Helical" evidence="1">
    <location>
        <begin position="131"/>
        <end position="151"/>
    </location>
</feature>
<feature type="transmembrane region" description="Helical" evidence="1">
    <location>
        <begin position="157"/>
        <end position="177"/>
    </location>
</feature>
<feature type="transmembrane region" description="Helical" evidence="1">
    <location>
        <begin position="202"/>
        <end position="222"/>
    </location>
</feature>
<feature type="transmembrane region" description="Helical" evidence="1">
    <location>
        <begin position="233"/>
        <end position="253"/>
    </location>
</feature>
<feature type="transmembrane region" description="Helical" evidence="1">
    <location>
        <begin position="269"/>
        <end position="289"/>
    </location>
</feature>
<feature type="transmembrane region" description="Helical" evidence="1">
    <location>
        <begin position="293"/>
        <end position="313"/>
    </location>
</feature>
<feature type="transmembrane region" description="Helical" evidence="1">
    <location>
        <begin position="333"/>
        <end position="353"/>
    </location>
</feature>
<feature type="transmembrane region" description="Helical" evidence="1">
    <location>
        <begin position="360"/>
        <end position="380"/>
    </location>
</feature>
<keyword id="KW-1003">Cell membrane</keyword>
<keyword id="KW-0472">Membrane</keyword>
<keyword id="KW-1185">Reference proteome</keyword>
<keyword id="KW-0812">Transmembrane</keyword>
<keyword id="KW-1133">Transmembrane helix</keyword>
<keyword id="KW-0813">Transport</keyword>
<sequence length="397" mass="42451">MPRALKILVIGMFINVTGASFLWPLNTIYIHNHLGKSLTVAGLVLMLNSGASVAGNLCGGFLFDKIGGFKSIMLGIAITLASLMGLVFFHDWPAYIVLLTIVGFGSGVVFPASYAMAGSVWPEGGRKAFNAIYVAQNAGVAVGSALGGVVASFSFSYVFLANAVLYLIFFFIVYFGFRNIQTGDASQTSVLDYDAVNSKAKFAALIILSGGYVLGWLAYSQWSTTIASYTQSIGISLSLYSVLWTVNGILIVLGQPLVSFVVKKWAESLKAQMVIGFIIFIVSFSMLLTAKQFPMFLAAMVILTIGEMLVWPAVPTIANQLAPKGKEGFYQGFVNSAATGGRMIGPLFGGVLVDHYGIRALVLSLLVLLLISIATTLLYDKRIKSAKETNKQASISS</sequence>
<proteinExistence type="inferred from homology"/>
<reference key="1">
    <citation type="journal article" date="1997" name="Microbiology">
        <title>Sequencing and functional annotation of the Bacillus subtilis genes in the 200 kb rrnB-dnaB region.</title>
        <authorList>
            <person name="Lapidus A."/>
            <person name="Galleron N."/>
            <person name="Sorokin A."/>
            <person name="Ehrlich S.D."/>
        </authorList>
    </citation>
    <scope>NUCLEOTIDE SEQUENCE [GENOMIC DNA]</scope>
    <source>
        <strain>168</strain>
    </source>
</reference>
<reference key="2">
    <citation type="journal article" date="1997" name="Nature">
        <title>The complete genome sequence of the Gram-positive bacterium Bacillus subtilis.</title>
        <authorList>
            <person name="Kunst F."/>
            <person name="Ogasawara N."/>
            <person name="Moszer I."/>
            <person name="Albertini A.M."/>
            <person name="Alloni G."/>
            <person name="Azevedo V."/>
            <person name="Bertero M.G."/>
            <person name="Bessieres P."/>
            <person name="Bolotin A."/>
            <person name="Borchert S."/>
            <person name="Borriss R."/>
            <person name="Boursier L."/>
            <person name="Brans A."/>
            <person name="Braun M."/>
            <person name="Brignell S.C."/>
            <person name="Bron S."/>
            <person name="Brouillet S."/>
            <person name="Bruschi C.V."/>
            <person name="Caldwell B."/>
            <person name="Capuano V."/>
            <person name="Carter N.M."/>
            <person name="Choi S.-K."/>
            <person name="Codani J.-J."/>
            <person name="Connerton I.F."/>
            <person name="Cummings N.J."/>
            <person name="Daniel R.A."/>
            <person name="Denizot F."/>
            <person name="Devine K.M."/>
            <person name="Duesterhoeft A."/>
            <person name="Ehrlich S.D."/>
            <person name="Emmerson P.T."/>
            <person name="Entian K.-D."/>
            <person name="Errington J."/>
            <person name="Fabret C."/>
            <person name="Ferrari E."/>
            <person name="Foulger D."/>
            <person name="Fritz C."/>
            <person name="Fujita M."/>
            <person name="Fujita Y."/>
            <person name="Fuma S."/>
            <person name="Galizzi A."/>
            <person name="Galleron N."/>
            <person name="Ghim S.-Y."/>
            <person name="Glaser P."/>
            <person name="Goffeau A."/>
            <person name="Golightly E.J."/>
            <person name="Grandi G."/>
            <person name="Guiseppi G."/>
            <person name="Guy B.J."/>
            <person name="Haga K."/>
            <person name="Haiech J."/>
            <person name="Harwood C.R."/>
            <person name="Henaut A."/>
            <person name="Hilbert H."/>
            <person name="Holsappel S."/>
            <person name="Hosono S."/>
            <person name="Hullo M.-F."/>
            <person name="Itaya M."/>
            <person name="Jones L.-M."/>
            <person name="Joris B."/>
            <person name="Karamata D."/>
            <person name="Kasahara Y."/>
            <person name="Klaerr-Blanchard M."/>
            <person name="Klein C."/>
            <person name="Kobayashi Y."/>
            <person name="Koetter P."/>
            <person name="Koningstein G."/>
            <person name="Krogh S."/>
            <person name="Kumano M."/>
            <person name="Kurita K."/>
            <person name="Lapidus A."/>
            <person name="Lardinois S."/>
            <person name="Lauber J."/>
            <person name="Lazarevic V."/>
            <person name="Lee S.-M."/>
            <person name="Levine A."/>
            <person name="Liu H."/>
            <person name="Masuda S."/>
            <person name="Mauel C."/>
            <person name="Medigue C."/>
            <person name="Medina N."/>
            <person name="Mellado R.P."/>
            <person name="Mizuno M."/>
            <person name="Moestl D."/>
            <person name="Nakai S."/>
            <person name="Noback M."/>
            <person name="Noone D."/>
            <person name="O'Reilly M."/>
            <person name="Ogawa K."/>
            <person name="Ogiwara A."/>
            <person name="Oudega B."/>
            <person name="Park S.-H."/>
            <person name="Parro V."/>
            <person name="Pohl T.M."/>
            <person name="Portetelle D."/>
            <person name="Porwollik S."/>
            <person name="Prescott A.M."/>
            <person name="Presecan E."/>
            <person name="Pujic P."/>
            <person name="Purnelle B."/>
            <person name="Rapoport G."/>
            <person name="Rey M."/>
            <person name="Reynolds S."/>
            <person name="Rieger M."/>
            <person name="Rivolta C."/>
            <person name="Rocha E."/>
            <person name="Roche B."/>
            <person name="Rose M."/>
            <person name="Sadaie Y."/>
            <person name="Sato T."/>
            <person name="Scanlan E."/>
            <person name="Schleich S."/>
            <person name="Schroeter R."/>
            <person name="Scoffone F."/>
            <person name="Sekiguchi J."/>
            <person name="Sekowska A."/>
            <person name="Seror S.J."/>
            <person name="Serror P."/>
            <person name="Shin B.-S."/>
            <person name="Soldo B."/>
            <person name="Sorokin A."/>
            <person name="Tacconi E."/>
            <person name="Takagi T."/>
            <person name="Takahashi H."/>
            <person name="Takemaru K."/>
            <person name="Takeuchi M."/>
            <person name="Tamakoshi A."/>
            <person name="Tanaka T."/>
            <person name="Terpstra P."/>
            <person name="Tognoni A."/>
            <person name="Tosato V."/>
            <person name="Uchiyama S."/>
            <person name="Vandenbol M."/>
            <person name="Vannier F."/>
            <person name="Vassarotti A."/>
            <person name="Viari A."/>
            <person name="Wambutt R."/>
            <person name="Wedler E."/>
            <person name="Wedler H."/>
            <person name="Weitzenegger T."/>
            <person name="Winters P."/>
            <person name="Wipat A."/>
            <person name="Yamamoto H."/>
            <person name="Yamane K."/>
            <person name="Yasumoto K."/>
            <person name="Yata K."/>
            <person name="Yoshida K."/>
            <person name="Yoshikawa H.-F."/>
            <person name="Zumstein E."/>
            <person name="Yoshikawa H."/>
            <person name="Danchin A."/>
        </authorList>
    </citation>
    <scope>NUCLEOTIDE SEQUENCE [LARGE SCALE GENOMIC DNA]</scope>
    <source>
        <strain>168</strain>
    </source>
</reference>